<name>ZRAR_SALTY</name>
<proteinExistence type="evidence at protein level"/>
<organism>
    <name type="scientific">Salmonella typhimurium (strain LT2 / SGSC1412 / ATCC 700720)</name>
    <dbReference type="NCBI Taxonomy" id="99287"/>
    <lineage>
        <taxon>Bacteria</taxon>
        <taxon>Pseudomonadati</taxon>
        <taxon>Pseudomonadota</taxon>
        <taxon>Gammaproteobacteria</taxon>
        <taxon>Enterobacterales</taxon>
        <taxon>Enterobacteriaceae</taxon>
        <taxon>Salmonella</taxon>
    </lineage>
</organism>
<sequence>MIRGKIDILVVDDDVSHCTILQALLRGWGYNVALAYSGHDALAQVREKVFDLVLCDVRMAEMDGIATLKEIKALNPAIPILIMTAFSSVETAVEALKAGALDYLIKPLDFDRLQETLEKALAHTRETGAELPSASAAQFGMIGSSPAMQHLLNEIAMVAPSDATVLIHGDSGTGKELVARALHACSARSDRPLVTLNCAALNESLLESELFGHEKGAFTGADKRREGRFVEADGGTLFLDEIGDISPLMQVRLLRAIQEREVQRVGSNQTISVDVRLIAATHRDLAEEVSAGRFRQDLYYRLNVVAIEMPSLRQRREDIPLLADHFLRRFAERNRKVVKGFTPQAMDLLIHYDWPGNIRELENAIERAVVLLTGEYISERELPLAIAATPIKTEYSGEIQPLVDVEKEVILAALEKTGGNKTEAARQLGITRKTLLAKLSR</sequence>
<reference key="1">
    <citation type="journal article" date="1991" name="Biochim. Biophys. Acta">
        <title>Cloning and sequence analysis of hydrogenase regulatory genes (hydHG) from Salmonella typhimurium.</title>
        <authorList>
            <person name="Chopra A.K."/>
            <person name="Peterson J.W."/>
            <person name="Prasad R."/>
        </authorList>
    </citation>
    <scope>NUCLEOTIDE SEQUENCE [GENOMIC DNA]</scope>
</reference>
<reference key="2">
    <citation type="journal article" date="2001" name="Nature">
        <title>Complete genome sequence of Salmonella enterica serovar Typhimurium LT2.</title>
        <authorList>
            <person name="McClelland M."/>
            <person name="Sanderson K.E."/>
            <person name="Spieth J."/>
            <person name="Clifton S.W."/>
            <person name="Latreille P."/>
            <person name="Courtney L."/>
            <person name="Porwollik S."/>
            <person name="Ali J."/>
            <person name="Dante M."/>
            <person name="Du F."/>
            <person name="Hou S."/>
            <person name="Layman D."/>
            <person name="Leonard S."/>
            <person name="Nguyen C."/>
            <person name="Scott K."/>
            <person name="Holmes A."/>
            <person name="Grewal N."/>
            <person name="Mulvaney E."/>
            <person name="Ryan E."/>
            <person name="Sun H."/>
            <person name="Florea L."/>
            <person name="Miller W."/>
            <person name="Stoneking T."/>
            <person name="Nhan M."/>
            <person name="Waterston R."/>
            <person name="Wilson R.K."/>
        </authorList>
    </citation>
    <scope>NUCLEOTIDE SEQUENCE [LARGE SCALE GENOMIC DNA]</scope>
    <source>
        <strain>LT2 / SGSC1412 / ATCC 700720</strain>
    </source>
</reference>
<reference key="3">
    <citation type="journal article" date="2012" name="Biochem. J.">
        <title>ZraP is a periplasmic molecular chaperone and a repressor of the zinc-responsive two-component regulator ZraSR.</title>
        <authorList>
            <person name="Appia-Ayme C."/>
            <person name="Hall A."/>
            <person name="Patrick E."/>
            <person name="Rajadurai S."/>
            <person name="Clarke T.A."/>
            <person name="Rowley G."/>
        </authorList>
    </citation>
    <scope>FUNCTION</scope>
    <scope>ACTIVITY REGULATION</scope>
    <source>
        <strain>SL1344</strain>
    </source>
</reference>
<reference evidence="11" key="4">
    <citation type="journal article" date="2005" name="J. Struct. Biol.">
        <title>Crystal structure of the central and C-terminal domain of the sigma(54)-activator ZraR.</title>
        <authorList>
            <person name="Sallai L."/>
            <person name="Tucker P.A."/>
        </authorList>
    </citation>
    <scope>X-RAY CRYSTALLOGRAPHY (3.00 ANGSTROMS) OF 141-441 IN COMPLEX WITH ATP</scope>
    <scope>SUBUNIT</scope>
</reference>
<protein>
    <recommendedName>
        <fullName evidence="9">Transcriptional regulatory protein ZraR</fullName>
    </recommendedName>
</protein>
<comment type="function">
    <text evidence="2 6">Part of the Zra signaling pathway, an envelope stress response (ESR) system composed of the periplasmic accessory protein ZraP, the histidine kinase ZraS and the transcriptional regulator ZraR (PubMed:22084975). The ZraPSR system contributes to antibiotic resistance and is important for membrane integrity in the presence of membrane-targeting biocides (By similarity). ZraR is a member of the two-component regulatory system ZraS/ZraR (PubMed:22084975). When activated by ZraS, acts in conjunction with sigma-54 to regulate the expression of zraP in the presence of high Zn(2+) or Pb(2+) concentrations (By similarity). Also positively autoregulates the expression of the zraSR operon (By similarity).</text>
</comment>
<comment type="activity regulation">
    <text evidence="10">Activity of the ZraS/ZraR two-component system is repressed by the zinc-bound form of ZraP, which probably interacts with the periplasmic region of ZraS.</text>
</comment>
<comment type="subunit">
    <text evidence="5">Forms homohexamers in the crystal structure (PubMed:16005641). However, the dimerization interface between DNA-binding domains observed in the crystal structure suggests that dodecamers, rather than hexamers, might be the functionally important oligomer (PubMed:16005641).</text>
</comment>
<comment type="subcellular location">
    <subcellularLocation>
        <location evidence="9">Cytoplasm</location>
    </subcellularLocation>
</comment>
<comment type="PTM">
    <text evidence="2">Phosphorylated by ZraS.</text>
</comment>
<comment type="caution">
    <text evidence="10">Was originally thought to be involved in the regulation of the labile hydrogenase activity.</text>
</comment>
<keyword id="KW-0002">3D-structure</keyword>
<keyword id="KW-0010">Activator</keyword>
<keyword id="KW-0067">ATP-binding</keyword>
<keyword id="KW-0963">Cytoplasm</keyword>
<keyword id="KW-0238">DNA-binding</keyword>
<keyword id="KW-0547">Nucleotide-binding</keyword>
<keyword id="KW-0597">Phosphoprotein</keyword>
<keyword id="KW-1185">Reference proteome</keyword>
<keyword id="KW-0346">Stress response</keyword>
<keyword id="KW-0804">Transcription</keyword>
<keyword id="KW-0805">Transcription regulation</keyword>
<keyword id="KW-0902">Two-component regulatory system</keyword>
<accession>P25852</accession>
<accession>Q9L9H8</accession>
<dbReference type="EMBL" id="M64988">
    <property type="protein sequence ID" value="AAA27149.1"/>
    <property type="molecule type" value="mRNA"/>
</dbReference>
<dbReference type="EMBL" id="AF170176">
    <property type="protein sequence ID" value="AAF33506.1"/>
    <property type="molecule type" value="Genomic_DNA"/>
</dbReference>
<dbReference type="EMBL" id="AE006468">
    <property type="protein sequence ID" value="AAL23002.1"/>
    <property type="molecule type" value="Genomic_DNA"/>
</dbReference>
<dbReference type="PIR" id="S19606">
    <property type="entry name" value="S19606"/>
</dbReference>
<dbReference type="RefSeq" id="NP_463043.1">
    <property type="nucleotide sequence ID" value="NC_003197.2"/>
</dbReference>
<dbReference type="RefSeq" id="WP_000617942.1">
    <property type="nucleotide sequence ID" value="NC_003197.2"/>
</dbReference>
<dbReference type="PDB" id="1OJL">
    <property type="method" value="X-ray"/>
    <property type="resolution" value="3.00 A"/>
    <property type="chains" value="A/B/C/D/E/F=141-441"/>
</dbReference>
<dbReference type="PDBsum" id="1OJL"/>
<dbReference type="SMR" id="P25852"/>
<dbReference type="STRING" id="99287.STM4174"/>
<dbReference type="PaxDb" id="99287-STM4174"/>
<dbReference type="GeneID" id="1255700"/>
<dbReference type="KEGG" id="stm:STM4174"/>
<dbReference type="PATRIC" id="fig|99287.12.peg.4388"/>
<dbReference type="HOGENOM" id="CLU_000445_0_6_6"/>
<dbReference type="OMA" id="RGWGYQV"/>
<dbReference type="PhylomeDB" id="P25852"/>
<dbReference type="BioCyc" id="SENT99287:STM4174-MONOMER"/>
<dbReference type="EvolutionaryTrace" id="P25852"/>
<dbReference type="Proteomes" id="UP000001014">
    <property type="component" value="Chromosome"/>
</dbReference>
<dbReference type="GO" id="GO:0005737">
    <property type="term" value="C:cytoplasm"/>
    <property type="evidence" value="ECO:0007669"/>
    <property type="project" value="UniProtKB-SubCell"/>
</dbReference>
<dbReference type="GO" id="GO:0032993">
    <property type="term" value="C:protein-DNA complex"/>
    <property type="evidence" value="ECO:0000318"/>
    <property type="project" value="GO_Central"/>
</dbReference>
<dbReference type="GO" id="GO:0005524">
    <property type="term" value="F:ATP binding"/>
    <property type="evidence" value="ECO:0007669"/>
    <property type="project" value="UniProtKB-KW"/>
</dbReference>
<dbReference type="GO" id="GO:0016887">
    <property type="term" value="F:ATP hydrolysis activity"/>
    <property type="evidence" value="ECO:0007669"/>
    <property type="project" value="InterPro"/>
</dbReference>
<dbReference type="GO" id="GO:0000987">
    <property type="term" value="F:cis-regulatory region sequence-specific DNA binding"/>
    <property type="evidence" value="ECO:0000318"/>
    <property type="project" value="GO_Central"/>
</dbReference>
<dbReference type="GO" id="GO:0001216">
    <property type="term" value="F:DNA-binding transcription activator activity"/>
    <property type="evidence" value="ECO:0000318"/>
    <property type="project" value="GO_Central"/>
</dbReference>
<dbReference type="GO" id="GO:0000160">
    <property type="term" value="P:phosphorelay signal transduction system"/>
    <property type="evidence" value="ECO:0007669"/>
    <property type="project" value="UniProtKB-KW"/>
</dbReference>
<dbReference type="GO" id="GO:0045893">
    <property type="term" value="P:positive regulation of DNA-templated transcription"/>
    <property type="evidence" value="ECO:0000318"/>
    <property type="project" value="GO_Central"/>
</dbReference>
<dbReference type="CDD" id="cd00009">
    <property type="entry name" value="AAA"/>
    <property type="match status" value="1"/>
</dbReference>
<dbReference type="FunFam" id="1.10.8.60:FF:000014">
    <property type="entry name" value="DNA-binding transcriptional regulator NtrC"/>
    <property type="match status" value="1"/>
</dbReference>
<dbReference type="FunFam" id="3.40.50.2300:FF:000018">
    <property type="entry name" value="DNA-binding transcriptional regulator NtrC"/>
    <property type="match status" value="1"/>
</dbReference>
<dbReference type="FunFam" id="3.40.50.300:FF:000006">
    <property type="entry name" value="DNA-binding transcriptional regulator NtrC"/>
    <property type="match status" value="1"/>
</dbReference>
<dbReference type="Gene3D" id="1.10.8.60">
    <property type="match status" value="1"/>
</dbReference>
<dbReference type="Gene3D" id="3.40.50.2300">
    <property type="match status" value="1"/>
</dbReference>
<dbReference type="Gene3D" id="1.10.10.60">
    <property type="entry name" value="Homeodomain-like"/>
    <property type="match status" value="1"/>
</dbReference>
<dbReference type="Gene3D" id="3.40.50.300">
    <property type="entry name" value="P-loop containing nucleotide triphosphate hydrolases"/>
    <property type="match status" value="1"/>
</dbReference>
<dbReference type="InterPro" id="IPR003593">
    <property type="entry name" value="AAA+_ATPase"/>
</dbReference>
<dbReference type="InterPro" id="IPR011006">
    <property type="entry name" value="CheY-like_superfamily"/>
</dbReference>
<dbReference type="InterPro" id="IPR009057">
    <property type="entry name" value="Homeodomain-like_sf"/>
</dbReference>
<dbReference type="InterPro" id="IPR002197">
    <property type="entry name" value="HTH_Fis"/>
</dbReference>
<dbReference type="InterPro" id="IPR027417">
    <property type="entry name" value="P-loop_NTPase"/>
</dbReference>
<dbReference type="InterPro" id="IPR001789">
    <property type="entry name" value="Sig_transdc_resp-reg_receiver"/>
</dbReference>
<dbReference type="InterPro" id="IPR002078">
    <property type="entry name" value="Sigma_54_int"/>
</dbReference>
<dbReference type="InterPro" id="IPR025662">
    <property type="entry name" value="Sigma_54_int_dom_ATP-bd_1"/>
</dbReference>
<dbReference type="InterPro" id="IPR025943">
    <property type="entry name" value="Sigma_54_int_dom_ATP-bd_2"/>
</dbReference>
<dbReference type="InterPro" id="IPR025944">
    <property type="entry name" value="Sigma_54_int_dom_CS"/>
</dbReference>
<dbReference type="NCBIfam" id="NF007689">
    <property type="entry name" value="PRK10365.1"/>
    <property type="match status" value="1"/>
</dbReference>
<dbReference type="PANTHER" id="PTHR32071:SF117">
    <property type="entry name" value="PTS-DEPENDENT DIHYDROXYACETONE KINASE OPERON REGULATORY PROTEIN-RELATED"/>
    <property type="match status" value="1"/>
</dbReference>
<dbReference type="PANTHER" id="PTHR32071">
    <property type="entry name" value="TRANSCRIPTIONAL REGULATORY PROTEIN"/>
    <property type="match status" value="1"/>
</dbReference>
<dbReference type="Pfam" id="PF02954">
    <property type="entry name" value="HTH_8"/>
    <property type="match status" value="1"/>
</dbReference>
<dbReference type="Pfam" id="PF00072">
    <property type="entry name" value="Response_reg"/>
    <property type="match status" value="1"/>
</dbReference>
<dbReference type="Pfam" id="PF00158">
    <property type="entry name" value="Sigma54_activat"/>
    <property type="match status" value="1"/>
</dbReference>
<dbReference type="PRINTS" id="PR01590">
    <property type="entry name" value="HTHFIS"/>
</dbReference>
<dbReference type="SMART" id="SM00382">
    <property type="entry name" value="AAA"/>
    <property type="match status" value="1"/>
</dbReference>
<dbReference type="SMART" id="SM00448">
    <property type="entry name" value="REC"/>
    <property type="match status" value="1"/>
</dbReference>
<dbReference type="SUPFAM" id="SSF52172">
    <property type="entry name" value="CheY-like"/>
    <property type="match status" value="1"/>
</dbReference>
<dbReference type="SUPFAM" id="SSF46689">
    <property type="entry name" value="Homeodomain-like"/>
    <property type="match status" value="1"/>
</dbReference>
<dbReference type="SUPFAM" id="SSF52540">
    <property type="entry name" value="P-loop containing nucleoside triphosphate hydrolases"/>
    <property type="match status" value="1"/>
</dbReference>
<dbReference type="PROSITE" id="PS50110">
    <property type="entry name" value="RESPONSE_REGULATORY"/>
    <property type="match status" value="1"/>
</dbReference>
<dbReference type="PROSITE" id="PS00675">
    <property type="entry name" value="SIGMA54_INTERACT_1"/>
    <property type="match status" value="1"/>
</dbReference>
<dbReference type="PROSITE" id="PS00676">
    <property type="entry name" value="SIGMA54_INTERACT_2"/>
    <property type="match status" value="1"/>
</dbReference>
<dbReference type="PROSITE" id="PS00688">
    <property type="entry name" value="SIGMA54_INTERACT_3"/>
    <property type="match status" value="1"/>
</dbReference>
<dbReference type="PROSITE" id="PS50045">
    <property type="entry name" value="SIGMA54_INTERACT_4"/>
    <property type="match status" value="1"/>
</dbReference>
<feature type="chain" id="PRO_0000081283" description="Transcriptional regulatory protein ZraR">
    <location>
        <begin position="1"/>
        <end position="441"/>
    </location>
</feature>
<feature type="domain" description="Response regulatory" evidence="3">
    <location>
        <begin position="7"/>
        <end position="121"/>
    </location>
</feature>
<feature type="domain" description="Sigma-54 factor interaction" evidence="4">
    <location>
        <begin position="141"/>
        <end position="370"/>
    </location>
</feature>
<feature type="DNA-binding region" description="H-T-H motif" evidence="1">
    <location>
        <begin position="421"/>
        <end position="440"/>
    </location>
</feature>
<feature type="binding site" evidence="5 11">
    <location>
        <position position="172"/>
    </location>
    <ligand>
        <name>ATP</name>
        <dbReference type="ChEBI" id="CHEBI:30616"/>
    </ligand>
</feature>
<feature type="binding site" evidence="5 11">
    <location>
        <position position="173"/>
    </location>
    <ligand>
        <name>ATP</name>
        <dbReference type="ChEBI" id="CHEBI:30616"/>
    </ligand>
</feature>
<feature type="binding site" evidence="5 11">
    <location>
        <position position="329"/>
    </location>
    <ligand>
        <name>ATP</name>
        <dbReference type="ChEBI" id="CHEBI:30616"/>
    </ligand>
</feature>
<feature type="binding site" evidence="5 11">
    <location>
        <position position="359"/>
    </location>
    <ligand>
        <name>ATP</name>
        <dbReference type="ChEBI" id="CHEBI:30616"/>
    </ligand>
</feature>
<feature type="modified residue" description="4-aspartylphosphate" evidence="3">
    <location>
        <position position="56"/>
    </location>
</feature>
<feature type="sequence conflict" description="In Ref. 1; AAA27149." evidence="9" ref="1">
    <original>A</original>
    <variation>R</variation>
    <location>
        <position position="159"/>
    </location>
</feature>
<feature type="helix" evidence="12">
    <location>
        <begin position="146"/>
        <end position="158"/>
    </location>
</feature>
<feature type="strand" evidence="12">
    <location>
        <begin position="165"/>
        <end position="169"/>
    </location>
</feature>
<feature type="helix" evidence="12">
    <location>
        <begin position="175"/>
        <end position="185"/>
    </location>
</feature>
<feature type="strand" evidence="12">
    <location>
        <begin position="189"/>
        <end position="191"/>
    </location>
</feature>
<feature type="strand" evidence="12">
    <location>
        <begin position="195"/>
        <end position="197"/>
    </location>
</feature>
<feature type="helix" evidence="12">
    <location>
        <begin position="203"/>
        <end position="210"/>
    </location>
</feature>
<feature type="helix" evidence="12">
    <location>
        <begin position="228"/>
        <end position="232"/>
    </location>
</feature>
<feature type="strand" evidence="12">
    <location>
        <begin position="235"/>
        <end position="241"/>
    </location>
</feature>
<feature type="helix" evidence="12">
    <location>
        <begin position="247"/>
        <end position="258"/>
    </location>
</feature>
<feature type="strand" evidence="12">
    <location>
        <begin position="259"/>
        <end position="261"/>
    </location>
</feature>
<feature type="strand" evidence="12">
    <location>
        <begin position="276"/>
        <end position="283"/>
    </location>
</feature>
<feature type="helix" evidence="12">
    <location>
        <begin position="285"/>
        <end position="291"/>
    </location>
</feature>
<feature type="helix" evidence="12">
    <location>
        <begin position="296"/>
        <end position="302"/>
    </location>
</feature>
<feature type="strand" evidence="12">
    <location>
        <begin position="303"/>
        <end position="308"/>
    </location>
</feature>
<feature type="helix" evidence="12">
    <location>
        <begin position="313"/>
        <end position="318"/>
    </location>
</feature>
<feature type="helix" evidence="12">
    <location>
        <begin position="319"/>
        <end position="333"/>
    </location>
</feature>
<feature type="helix" evidence="12">
    <location>
        <begin position="343"/>
        <end position="351"/>
    </location>
</feature>
<feature type="helix" evidence="12">
    <location>
        <begin position="357"/>
        <end position="371"/>
    </location>
</feature>
<feature type="strand" evidence="12">
    <location>
        <begin position="374"/>
        <end position="377"/>
    </location>
</feature>
<feature type="helix" evidence="12">
    <location>
        <begin position="379"/>
        <end position="381"/>
    </location>
</feature>
<feature type="helix" evidence="12">
    <location>
        <begin position="384"/>
        <end position="386"/>
    </location>
</feature>
<feature type="helix" evidence="12">
    <location>
        <begin position="402"/>
        <end position="415"/>
    </location>
</feature>
<feature type="turn" evidence="12">
    <location>
        <begin position="416"/>
        <end position="419"/>
    </location>
</feature>
<feature type="helix" evidence="12">
    <location>
        <begin position="421"/>
        <end position="428"/>
    </location>
</feature>
<feature type="helix" evidence="12">
    <location>
        <begin position="432"/>
        <end position="438"/>
    </location>
</feature>
<evidence type="ECO:0000250" key="1"/>
<evidence type="ECO:0000250" key="2">
    <source>
        <dbReference type="UniProtKB" id="P14375"/>
    </source>
</evidence>
<evidence type="ECO:0000255" key="3">
    <source>
        <dbReference type="PROSITE-ProRule" id="PRU00169"/>
    </source>
</evidence>
<evidence type="ECO:0000255" key="4">
    <source>
        <dbReference type="PROSITE-ProRule" id="PRU00193"/>
    </source>
</evidence>
<evidence type="ECO:0000269" key="5">
    <source>
    </source>
</evidence>
<evidence type="ECO:0000269" key="6">
    <source>
    </source>
</evidence>
<evidence type="ECO:0000303" key="7">
    <source>
    </source>
</evidence>
<evidence type="ECO:0000303" key="8">
    <source>
    </source>
</evidence>
<evidence type="ECO:0000305" key="9"/>
<evidence type="ECO:0000305" key="10">
    <source>
    </source>
</evidence>
<evidence type="ECO:0007744" key="11">
    <source>
        <dbReference type="PDB" id="1OJL"/>
    </source>
</evidence>
<evidence type="ECO:0007829" key="12">
    <source>
        <dbReference type="PDB" id="1OJL"/>
    </source>
</evidence>
<gene>
    <name evidence="7" type="primary">zraR</name>
    <name evidence="8" type="synonym">hydG</name>
    <name type="ordered locus">STM4174</name>
    <name type="ORF">STMF1.27</name>
</gene>